<reference key="1">
    <citation type="submission" date="2007-03" db="EMBL/GenBank/DDBJ databases">
        <title>Genome sequence of Rhodospirillum centenum.</title>
        <authorList>
            <person name="Touchman J.W."/>
            <person name="Bauer C."/>
            <person name="Blankenship R.E."/>
        </authorList>
    </citation>
    <scope>NUCLEOTIDE SEQUENCE [LARGE SCALE GENOMIC DNA]</scope>
    <source>
        <strain>ATCC 51521 / SW</strain>
    </source>
</reference>
<dbReference type="EC" id="2.7.1.30" evidence="1"/>
<dbReference type="EMBL" id="CP000613">
    <property type="protein sequence ID" value="ACI97716.1"/>
    <property type="molecule type" value="Genomic_DNA"/>
</dbReference>
<dbReference type="RefSeq" id="WP_012565507.1">
    <property type="nucleotide sequence ID" value="NC_011420.2"/>
</dbReference>
<dbReference type="SMR" id="B6IQI0"/>
<dbReference type="STRING" id="414684.RC1_0267"/>
<dbReference type="KEGG" id="rce:RC1_0267"/>
<dbReference type="eggNOG" id="COG0554">
    <property type="taxonomic scope" value="Bacteria"/>
</dbReference>
<dbReference type="HOGENOM" id="CLU_009281_2_3_5"/>
<dbReference type="OrthoDB" id="9805576at2"/>
<dbReference type="UniPathway" id="UPA00618">
    <property type="reaction ID" value="UER00672"/>
</dbReference>
<dbReference type="Proteomes" id="UP000001591">
    <property type="component" value="Chromosome"/>
</dbReference>
<dbReference type="GO" id="GO:0005829">
    <property type="term" value="C:cytosol"/>
    <property type="evidence" value="ECO:0007669"/>
    <property type="project" value="TreeGrafter"/>
</dbReference>
<dbReference type="GO" id="GO:0005524">
    <property type="term" value="F:ATP binding"/>
    <property type="evidence" value="ECO:0007669"/>
    <property type="project" value="UniProtKB-UniRule"/>
</dbReference>
<dbReference type="GO" id="GO:0004370">
    <property type="term" value="F:glycerol kinase activity"/>
    <property type="evidence" value="ECO:0000250"/>
    <property type="project" value="UniProtKB"/>
</dbReference>
<dbReference type="GO" id="GO:0019563">
    <property type="term" value="P:glycerol catabolic process"/>
    <property type="evidence" value="ECO:0007669"/>
    <property type="project" value="UniProtKB-UniRule"/>
</dbReference>
<dbReference type="GO" id="GO:0006071">
    <property type="term" value="P:glycerol metabolic process"/>
    <property type="evidence" value="ECO:0000250"/>
    <property type="project" value="UniProtKB"/>
</dbReference>
<dbReference type="GO" id="GO:0006072">
    <property type="term" value="P:glycerol-3-phosphate metabolic process"/>
    <property type="evidence" value="ECO:0007669"/>
    <property type="project" value="InterPro"/>
</dbReference>
<dbReference type="CDD" id="cd07786">
    <property type="entry name" value="FGGY_EcGK_like"/>
    <property type="match status" value="1"/>
</dbReference>
<dbReference type="FunFam" id="3.30.420.40:FF:000007">
    <property type="entry name" value="Glycerol kinase"/>
    <property type="match status" value="1"/>
</dbReference>
<dbReference type="FunFam" id="3.30.420.40:FF:000008">
    <property type="entry name" value="Glycerol kinase"/>
    <property type="match status" value="1"/>
</dbReference>
<dbReference type="Gene3D" id="3.30.420.40">
    <property type="match status" value="2"/>
</dbReference>
<dbReference type="HAMAP" id="MF_00186">
    <property type="entry name" value="Glycerol_kin"/>
    <property type="match status" value="1"/>
</dbReference>
<dbReference type="InterPro" id="IPR043129">
    <property type="entry name" value="ATPase_NBD"/>
</dbReference>
<dbReference type="InterPro" id="IPR000577">
    <property type="entry name" value="Carb_kinase_FGGY"/>
</dbReference>
<dbReference type="InterPro" id="IPR018483">
    <property type="entry name" value="Carb_kinase_FGGY_CS"/>
</dbReference>
<dbReference type="InterPro" id="IPR018485">
    <property type="entry name" value="FGGY_C"/>
</dbReference>
<dbReference type="InterPro" id="IPR018484">
    <property type="entry name" value="FGGY_N"/>
</dbReference>
<dbReference type="InterPro" id="IPR005999">
    <property type="entry name" value="Glycerol_kin"/>
</dbReference>
<dbReference type="NCBIfam" id="TIGR01311">
    <property type="entry name" value="glycerol_kin"/>
    <property type="match status" value="1"/>
</dbReference>
<dbReference type="NCBIfam" id="NF000756">
    <property type="entry name" value="PRK00047.1"/>
    <property type="match status" value="1"/>
</dbReference>
<dbReference type="PANTHER" id="PTHR10196:SF78">
    <property type="entry name" value="GLYCEROL KINASE"/>
    <property type="match status" value="1"/>
</dbReference>
<dbReference type="PANTHER" id="PTHR10196">
    <property type="entry name" value="SUGAR KINASE"/>
    <property type="match status" value="1"/>
</dbReference>
<dbReference type="Pfam" id="PF02782">
    <property type="entry name" value="FGGY_C"/>
    <property type="match status" value="1"/>
</dbReference>
<dbReference type="Pfam" id="PF00370">
    <property type="entry name" value="FGGY_N"/>
    <property type="match status" value="1"/>
</dbReference>
<dbReference type="PIRSF" id="PIRSF000538">
    <property type="entry name" value="GlpK"/>
    <property type="match status" value="1"/>
</dbReference>
<dbReference type="SUPFAM" id="SSF53067">
    <property type="entry name" value="Actin-like ATPase domain"/>
    <property type="match status" value="2"/>
</dbReference>
<dbReference type="PROSITE" id="PS00445">
    <property type="entry name" value="FGGY_KINASES_2"/>
    <property type="match status" value="1"/>
</dbReference>
<evidence type="ECO:0000255" key="1">
    <source>
        <dbReference type="HAMAP-Rule" id="MF_00186"/>
    </source>
</evidence>
<keyword id="KW-0067">ATP-binding</keyword>
<keyword id="KW-0319">Glycerol metabolism</keyword>
<keyword id="KW-0418">Kinase</keyword>
<keyword id="KW-0547">Nucleotide-binding</keyword>
<keyword id="KW-1185">Reference proteome</keyword>
<keyword id="KW-0808">Transferase</keyword>
<gene>
    <name evidence="1" type="primary">glpK</name>
    <name type="ordered locus">RC1_0267</name>
</gene>
<organism>
    <name type="scientific">Rhodospirillum centenum (strain ATCC 51521 / SW)</name>
    <dbReference type="NCBI Taxonomy" id="414684"/>
    <lineage>
        <taxon>Bacteria</taxon>
        <taxon>Pseudomonadati</taxon>
        <taxon>Pseudomonadota</taxon>
        <taxon>Alphaproteobacteria</taxon>
        <taxon>Rhodospirillales</taxon>
        <taxon>Rhodospirillaceae</taxon>
        <taxon>Rhodospirillum</taxon>
    </lineage>
</organism>
<comment type="function">
    <text evidence="1">Key enzyme in the regulation of glycerol uptake and metabolism. Catalyzes the phosphorylation of glycerol to yield sn-glycerol 3-phosphate.</text>
</comment>
<comment type="catalytic activity">
    <reaction evidence="1">
        <text>glycerol + ATP = sn-glycerol 3-phosphate + ADP + H(+)</text>
        <dbReference type="Rhea" id="RHEA:21644"/>
        <dbReference type="ChEBI" id="CHEBI:15378"/>
        <dbReference type="ChEBI" id="CHEBI:17754"/>
        <dbReference type="ChEBI" id="CHEBI:30616"/>
        <dbReference type="ChEBI" id="CHEBI:57597"/>
        <dbReference type="ChEBI" id="CHEBI:456216"/>
        <dbReference type="EC" id="2.7.1.30"/>
    </reaction>
</comment>
<comment type="activity regulation">
    <text evidence="1">Inhibited by fructose 1,6-bisphosphate (FBP).</text>
</comment>
<comment type="pathway">
    <text evidence="1">Polyol metabolism; glycerol degradation via glycerol kinase pathway; sn-glycerol 3-phosphate from glycerol: step 1/1.</text>
</comment>
<comment type="similarity">
    <text evidence="1">Belongs to the FGGY kinase family.</text>
</comment>
<sequence length="498" mass="53540">MGERPCILAIDQGTTSSRAIVFDAAASVLAVAQTEFPQHYPADGWVEHDPEDIWRSTLEVSRQALQAAEAKGARVVAIGVTNQRETTLIWDRRTGRPIHNAIVWQDRRTAADCAALAADGNETMVQARSGLLLDPYFSATKAAWLLDHVSGARMRAENGHLAFGTVDSFLLWRLTGGRVHATDATNASRTNLFNIHTQDWDPELLRLFRVPAALLPEVKDSADSFGQTDPALFGRPLPVLGLVGDQQGATIGQCCFEPGTIKSTYGTGCFVVVNTGATPVPSRHRLLTTIAYRIDGRTDYALEGSIFIAGAAVQWLRDGLGIVRTAAETEALAAGLPDNGGVYMVPAFTGLGAPHWDAAARGTLTGLTRASGRAHLARAALEASCYQTCDLLAAMREDGATPAALRVDGGMVANGWMVQFLADLLDLPVDRPVVMETTALGAAYLAGRKAGLYGDFAEFTRVWRRDRRFDPAMPTSTRTALLAGWQDAVRRTRSGAPD</sequence>
<protein>
    <recommendedName>
        <fullName evidence="1">Glycerol kinase</fullName>
        <ecNumber evidence="1">2.7.1.30</ecNumber>
    </recommendedName>
    <alternativeName>
        <fullName evidence="1">ATP:glycerol 3-phosphotransferase</fullName>
    </alternativeName>
    <alternativeName>
        <fullName evidence="1">Glycerokinase</fullName>
        <shortName evidence="1">GK</shortName>
    </alternativeName>
</protein>
<accession>B6IQI0</accession>
<proteinExistence type="inferred from homology"/>
<name>GLPK_RHOCS</name>
<feature type="chain" id="PRO_1000098751" description="Glycerol kinase">
    <location>
        <begin position="1"/>
        <end position="498"/>
    </location>
</feature>
<feature type="binding site" evidence="1">
    <location>
        <position position="14"/>
    </location>
    <ligand>
        <name>ADP</name>
        <dbReference type="ChEBI" id="CHEBI:456216"/>
    </ligand>
</feature>
<feature type="binding site" evidence="1">
    <location>
        <position position="14"/>
    </location>
    <ligand>
        <name>ATP</name>
        <dbReference type="ChEBI" id="CHEBI:30616"/>
    </ligand>
</feature>
<feature type="binding site" evidence="1">
    <location>
        <position position="14"/>
    </location>
    <ligand>
        <name>sn-glycerol 3-phosphate</name>
        <dbReference type="ChEBI" id="CHEBI:57597"/>
    </ligand>
</feature>
<feature type="binding site" evidence="1">
    <location>
        <position position="15"/>
    </location>
    <ligand>
        <name>ATP</name>
        <dbReference type="ChEBI" id="CHEBI:30616"/>
    </ligand>
</feature>
<feature type="binding site" evidence="1">
    <location>
        <position position="16"/>
    </location>
    <ligand>
        <name>ATP</name>
        <dbReference type="ChEBI" id="CHEBI:30616"/>
    </ligand>
</feature>
<feature type="binding site" evidence="1">
    <location>
        <position position="18"/>
    </location>
    <ligand>
        <name>ADP</name>
        <dbReference type="ChEBI" id="CHEBI:456216"/>
    </ligand>
</feature>
<feature type="binding site" evidence="1">
    <location>
        <position position="84"/>
    </location>
    <ligand>
        <name>glycerol</name>
        <dbReference type="ChEBI" id="CHEBI:17754"/>
    </ligand>
</feature>
<feature type="binding site" evidence="1">
    <location>
        <position position="84"/>
    </location>
    <ligand>
        <name>sn-glycerol 3-phosphate</name>
        <dbReference type="ChEBI" id="CHEBI:57597"/>
    </ligand>
</feature>
<feature type="binding site" evidence="1">
    <location>
        <position position="85"/>
    </location>
    <ligand>
        <name>glycerol</name>
        <dbReference type="ChEBI" id="CHEBI:17754"/>
    </ligand>
</feature>
<feature type="binding site" evidence="1">
    <location>
        <position position="85"/>
    </location>
    <ligand>
        <name>sn-glycerol 3-phosphate</name>
        <dbReference type="ChEBI" id="CHEBI:57597"/>
    </ligand>
</feature>
<feature type="binding site" evidence="1">
    <location>
        <position position="136"/>
    </location>
    <ligand>
        <name>glycerol</name>
        <dbReference type="ChEBI" id="CHEBI:17754"/>
    </ligand>
</feature>
<feature type="binding site" evidence="1">
    <location>
        <position position="136"/>
    </location>
    <ligand>
        <name>sn-glycerol 3-phosphate</name>
        <dbReference type="ChEBI" id="CHEBI:57597"/>
    </ligand>
</feature>
<feature type="binding site" evidence="1">
    <location>
        <position position="245"/>
    </location>
    <ligand>
        <name>glycerol</name>
        <dbReference type="ChEBI" id="CHEBI:17754"/>
    </ligand>
</feature>
<feature type="binding site" evidence="1">
    <location>
        <position position="245"/>
    </location>
    <ligand>
        <name>sn-glycerol 3-phosphate</name>
        <dbReference type="ChEBI" id="CHEBI:57597"/>
    </ligand>
</feature>
<feature type="binding site" evidence="1">
    <location>
        <position position="246"/>
    </location>
    <ligand>
        <name>glycerol</name>
        <dbReference type="ChEBI" id="CHEBI:17754"/>
    </ligand>
</feature>
<feature type="binding site" evidence="1">
    <location>
        <position position="267"/>
    </location>
    <ligand>
        <name>ADP</name>
        <dbReference type="ChEBI" id="CHEBI:456216"/>
    </ligand>
</feature>
<feature type="binding site" evidence="1">
    <location>
        <position position="267"/>
    </location>
    <ligand>
        <name>ATP</name>
        <dbReference type="ChEBI" id="CHEBI:30616"/>
    </ligand>
</feature>
<feature type="binding site" evidence="1">
    <location>
        <position position="310"/>
    </location>
    <ligand>
        <name>ADP</name>
        <dbReference type="ChEBI" id="CHEBI:456216"/>
    </ligand>
</feature>
<feature type="binding site" evidence="1">
    <location>
        <position position="310"/>
    </location>
    <ligand>
        <name>ATP</name>
        <dbReference type="ChEBI" id="CHEBI:30616"/>
    </ligand>
</feature>
<feature type="binding site" evidence="1">
    <location>
        <position position="314"/>
    </location>
    <ligand>
        <name>ATP</name>
        <dbReference type="ChEBI" id="CHEBI:30616"/>
    </ligand>
</feature>
<feature type="binding site" evidence="1">
    <location>
        <position position="410"/>
    </location>
    <ligand>
        <name>ADP</name>
        <dbReference type="ChEBI" id="CHEBI:456216"/>
    </ligand>
</feature>
<feature type="binding site" evidence="1">
    <location>
        <position position="410"/>
    </location>
    <ligand>
        <name>ATP</name>
        <dbReference type="ChEBI" id="CHEBI:30616"/>
    </ligand>
</feature>
<feature type="binding site" evidence="1">
    <location>
        <position position="414"/>
    </location>
    <ligand>
        <name>ADP</name>
        <dbReference type="ChEBI" id="CHEBI:456216"/>
    </ligand>
</feature>